<protein>
    <recommendedName>
        <fullName evidence="4">Concanavalin V</fullName>
    </recommendedName>
    <alternativeName>
        <fullName evidence="4">ConV</fullName>
    </alternativeName>
</protein>
<evidence type="ECO:0000250" key="1">
    <source>
        <dbReference type="UniProtKB" id="C0HK27"/>
    </source>
</evidence>
<evidence type="ECO:0000269" key="2">
    <source>
    </source>
</evidence>
<evidence type="ECO:0000269" key="3">
    <source>
    </source>
</evidence>
<evidence type="ECO:0000303" key="4">
    <source>
    </source>
</evidence>
<evidence type="ECO:0000305" key="5"/>
<evidence type="ECO:0000305" key="6">
    <source>
    </source>
</evidence>
<evidence type="ECO:0007829" key="7">
    <source>
        <dbReference type="PDB" id="5F5Q"/>
    </source>
</evidence>
<evidence type="ECO:0007829" key="8">
    <source>
        <dbReference type="PDB" id="6GW9"/>
    </source>
</evidence>
<accession>C0HJY1</accession>
<comment type="function">
    <text evidence="2 3">D-mannose/D-glucose-binding lectin which binds alpha-methyl-D-mannoside, D-mannose and D-glucose in that order (PubMed:24519628, PubMed:27737777). Also binds to serum fetuin and ovalbumin (PubMed:24519628). Has hemagglutinating activity towards rabbit erythrocytes (PubMed:24519628). Is not toxic towards larvae of the brine shrimp Artemia (PubMed:24519628). Induces relaxation in rat endothelized aorta (PubMed:24519628). Shows a transient edematogenic effect in rat (PubMed:27737777).</text>
</comment>
<comment type="biophysicochemical properties">
    <phDependence>
        <text evidence="2">Optimum pH is 7-9 with activity decreasing quickly at higher or lower pH.</text>
    </phDependence>
    <temperatureDependence>
        <text evidence="2">Hemagglutinating activity stable up to incubation at 80 degrees Celsius for 1 hour but diminishes with higher temperatures and is absent at 100 degrees Celsius.</text>
    </temperatureDependence>
</comment>
<comment type="subunit">
    <text evidence="3">Homotetramer.</text>
</comment>
<comment type="PTM">
    <text evidence="1 6">Concanavalin A-like lectins of the Diocleinae subtribe undergo proteolytic processing referred to as circular permutation. The propeptide is split into an N-terminal and a C-terminal part, the gamma and beta chain, respectively. These are then religated in beta-gamma order to form the mature alpha chain. The beta and gamma chains can often be detected in cell extracts (By similarity). Residues 1-118 of the mature chain, as displayed here, probably constitute the beta chain in the propeptide, residues 119-237 the gamma chain (Probable).</text>
</comment>
<comment type="mass spectrometry">
    <text>Alpha chain.</text>
</comment>
<comment type="miscellaneous">
    <text evidence="6">Binds one manganese (or another transition metal) ion and one calcium ion. The metal ions are essential for the saccharide-binding and cell-agglutinating activities.</text>
</comment>
<comment type="similarity">
    <text evidence="5">Belongs to the leguminous lectin family.</text>
</comment>
<name>CONV_CANCT</name>
<dbReference type="PDB" id="5F5Q">
    <property type="method" value="X-ray"/>
    <property type="resolution" value="2.52 A"/>
    <property type="chains" value="A/B=1-237"/>
</dbReference>
<dbReference type="PDB" id="6GW9">
    <property type="method" value="X-ray"/>
    <property type="resolution" value="2.10 A"/>
    <property type="chains" value="A=1-237"/>
</dbReference>
<dbReference type="PDB" id="9B33">
    <property type="method" value="EM"/>
    <property type="resolution" value="4.07 A"/>
    <property type="chains" value="E/F=1-237"/>
</dbReference>
<dbReference type="PDB" id="9B36">
    <property type="method" value="EM"/>
    <property type="resolution" value="4.29 A"/>
    <property type="chains" value="E/F/G/H=1-237"/>
</dbReference>
<dbReference type="PDB" id="9B37">
    <property type="method" value="EM"/>
    <property type="resolution" value="6.66 A"/>
    <property type="chains" value="E/F=1-237"/>
</dbReference>
<dbReference type="PDBsum" id="5F5Q"/>
<dbReference type="PDBsum" id="6GW9"/>
<dbReference type="PDBsum" id="9B33"/>
<dbReference type="PDBsum" id="9B36"/>
<dbReference type="PDBsum" id="9B37"/>
<dbReference type="EMDB" id="EMD-44124"/>
<dbReference type="EMDB" id="EMD-44129"/>
<dbReference type="EMDB" id="EMD-44130"/>
<dbReference type="SMR" id="C0HJY1"/>
<dbReference type="UniLectin" id="C0HJY1"/>
<dbReference type="GO" id="GO:0005509">
    <property type="term" value="F:calcium ion binding"/>
    <property type="evidence" value="ECO:0000314"/>
    <property type="project" value="UniProtKB"/>
</dbReference>
<dbReference type="GO" id="GO:0005536">
    <property type="term" value="F:D-glucose binding"/>
    <property type="evidence" value="ECO:0000314"/>
    <property type="project" value="UniProtKB"/>
</dbReference>
<dbReference type="GO" id="GO:0005537">
    <property type="term" value="F:D-mannose binding"/>
    <property type="evidence" value="ECO:0000314"/>
    <property type="project" value="UniProtKB"/>
</dbReference>
<dbReference type="GO" id="GO:0030145">
    <property type="term" value="F:manganese ion binding"/>
    <property type="evidence" value="ECO:0000314"/>
    <property type="project" value="UniProtKB"/>
</dbReference>
<dbReference type="GO" id="GO:0042311">
    <property type="term" value="P:vasodilation"/>
    <property type="evidence" value="ECO:0007669"/>
    <property type="project" value="UniProtKB-KW"/>
</dbReference>
<dbReference type="CDD" id="cd06899">
    <property type="entry name" value="lectin_legume_LecRK_Arcelin_ConA"/>
    <property type="match status" value="1"/>
</dbReference>
<dbReference type="FunFam" id="2.60.120.200:FF:000227">
    <property type="entry name" value="Concanavalin-A"/>
    <property type="match status" value="1"/>
</dbReference>
<dbReference type="Gene3D" id="2.60.120.200">
    <property type="match status" value="1"/>
</dbReference>
<dbReference type="InterPro" id="IPR013320">
    <property type="entry name" value="ConA-like_dom_sf"/>
</dbReference>
<dbReference type="InterPro" id="IPR000985">
    <property type="entry name" value="Lectin_LegA_CS"/>
</dbReference>
<dbReference type="InterPro" id="IPR019825">
    <property type="entry name" value="Lectin_legB_Mn/Ca_BS"/>
</dbReference>
<dbReference type="InterPro" id="IPR001220">
    <property type="entry name" value="Legume_lectin_dom"/>
</dbReference>
<dbReference type="InterPro" id="IPR050258">
    <property type="entry name" value="Leguminous_Lectin"/>
</dbReference>
<dbReference type="PANTHER" id="PTHR32401">
    <property type="entry name" value="CONCANAVALIN A-LIKE LECTIN FAMILY PROTEIN"/>
    <property type="match status" value="1"/>
</dbReference>
<dbReference type="PANTHER" id="PTHR32401:SF47">
    <property type="entry name" value="LEGUME LECTIN DOMAIN-CONTAINING PROTEIN"/>
    <property type="match status" value="1"/>
</dbReference>
<dbReference type="Pfam" id="PF00139">
    <property type="entry name" value="Lectin_legB"/>
    <property type="match status" value="2"/>
</dbReference>
<dbReference type="SUPFAM" id="SSF49899">
    <property type="entry name" value="Concanavalin A-like lectins/glucanases"/>
    <property type="match status" value="1"/>
</dbReference>
<dbReference type="PROSITE" id="PS00308">
    <property type="entry name" value="LECTIN_LEGUME_ALPHA"/>
    <property type="match status" value="1"/>
</dbReference>
<dbReference type="PROSITE" id="PS00307">
    <property type="entry name" value="LECTIN_LEGUME_BETA"/>
    <property type="match status" value="1"/>
</dbReference>
<sequence>ADTIVAVELDTYPNTDIGDPSYPHIGIDIKSVRSKKTAKWNMQNGKVGTAHIIYNSVGKRLSAVVSYPNGDSATVSYDVDLDNVLPEWVRVGLSASTGLYKETNTILSWSFTSKLKSNSTHETNALHFVFNQFSKDQKDLILQGDATTGTDGNLELTRVSSNGSPQGSSVGRALFYAPVHIWESSAVVASFDATFTFLIKSPDSHPADGIAFFISNIDSSIPSGSTGRLLGLFPDAN</sequence>
<keyword id="KW-0002">3D-structure</keyword>
<keyword id="KW-0106">Calcium</keyword>
<keyword id="KW-0903">Direct protein sequencing</keyword>
<keyword id="KW-0348">Hemagglutinin</keyword>
<keyword id="KW-0430">Lectin</keyword>
<keyword id="KW-0464">Manganese</keyword>
<keyword id="KW-0465">Mannose-binding</keyword>
<keyword id="KW-0479">Metal-binding</keyword>
<keyword id="KW-0838">Vasoactive</keyword>
<keyword id="KW-0840">Vasodilator</keyword>
<organism evidence="4">
    <name type="scientific">Canavalia cathartica</name>
    <name type="common">Jackbean</name>
    <name type="synonym">Canavalia virosa</name>
    <dbReference type="NCBI Taxonomy" id="28958"/>
    <lineage>
        <taxon>Eukaryota</taxon>
        <taxon>Viridiplantae</taxon>
        <taxon>Streptophyta</taxon>
        <taxon>Embryophyta</taxon>
        <taxon>Tracheophyta</taxon>
        <taxon>Spermatophyta</taxon>
        <taxon>Magnoliopsida</taxon>
        <taxon>eudicotyledons</taxon>
        <taxon>Gunneridae</taxon>
        <taxon>Pentapetalae</taxon>
        <taxon>rosids</taxon>
        <taxon>fabids</taxon>
        <taxon>Fabales</taxon>
        <taxon>Fabaceae</taxon>
        <taxon>Papilionoideae</taxon>
        <taxon>50 kb inversion clade</taxon>
        <taxon>NPAAA clade</taxon>
        <taxon>indigoferoid/millettioid clade</taxon>
        <taxon>Phaseoleae</taxon>
        <taxon>Canavalia</taxon>
    </lineage>
</organism>
<feature type="chain" id="PRO_0000440670" description="Concanavalin V" evidence="3">
    <location>
        <begin position="1"/>
        <end position="237"/>
    </location>
</feature>
<feature type="binding site" evidence="3">
    <location>
        <position position="8"/>
    </location>
    <ligand>
        <name>Mn(2+)</name>
        <dbReference type="ChEBI" id="CHEBI:29035"/>
    </ligand>
</feature>
<feature type="binding site" evidence="3">
    <location>
        <position position="10"/>
    </location>
    <ligand>
        <name>Ca(2+)</name>
        <dbReference type="ChEBI" id="CHEBI:29108"/>
    </ligand>
</feature>
<feature type="binding site" evidence="3">
    <location>
        <position position="10"/>
    </location>
    <ligand>
        <name>Mn(2+)</name>
        <dbReference type="ChEBI" id="CHEBI:29035"/>
    </ligand>
</feature>
<feature type="binding site" evidence="3">
    <location>
        <position position="12"/>
    </location>
    <ligand>
        <name>Ca(2+)</name>
        <dbReference type="ChEBI" id="CHEBI:29108"/>
    </ligand>
</feature>
<feature type="binding site" evidence="3">
    <location>
        <position position="14"/>
    </location>
    <ligand>
        <name>a carbohydrate</name>
        <dbReference type="ChEBI" id="CHEBI:16646"/>
    </ligand>
</feature>
<feature type="binding site" evidence="3">
    <location>
        <position position="14"/>
    </location>
    <ligand>
        <name>Ca(2+)</name>
        <dbReference type="ChEBI" id="CHEBI:29108"/>
    </ligand>
</feature>
<feature type="binding site" evidence="3">
    <location>
        <position position="19"/>
    </location>
    <ligand>
        <name>Ca(2+)</name>
        <dbReference type="ChEBI" id="CHEBI:29108"/>
    </ligand>
</feature>
<feature type="binding site" evidence="3">
    <location>
        <position position="19"/>
    </location>
    <ligand>
        <name>Mn(2+)</name>
        <dbReference type="ChEBI" id="CHEBI:29035"/>
    </ligand>
</feature>
<feature type="binding site" evidence="3">
    <location>
        <position position="24"/>
    </location>
    <ligand>
        <name>Mn(2+)</name>
        <dbReference type="ChEBI" id="CHEBI:29035"/>
    </ligand>
</feature>
<feature type="binding site" evidence="3">
    <location>
        <position position="70"/>
    </location>
    <ligand>
        <name>a carbohydrate</name>
        <dbReference type="ChEBI" id="CHEBI:16646"/>
    </ligand>
</feature>
<feature type="binding site" evidence="3">
    <location>
        <begin position="98"/>
        <end position="100"/>
    </location>
    <ligand>
        <name>a carbohydrate</name>
        <dbReference type="ChEBI" id="CHEBI:16646"/>
    </ligand>
</feature>
<feature type="binding site" evidence="3">
    <location>
        <position position="208"/>
    </location>
    <ligand>
        <name>a carbohydrate</name>
        <dbReference type="ChEBI" id="CHEBI:16646"/>
    </ligand>
</feature>
<feature type="binding site" evidence="3">
    <location>
        <position position="228"/>
    </location>
    <ligand>
        <name>a carbohydrate</name>
        <dbReference type="ChEBI" id="CHEBI:16646"/>
    </ligand>
</feature>
<feature type="strand" evidence="8">
    <location>
        <begin position="4"/>
        <end position="10"/>
    </location>
</feature>
<feature type="helix" evidence="8">
    <location>
        <begin position="15"/>
        <end position="17"/>
    </location>
</feature>
<feature type="strand" evidence="8">
    <location>
        <begin position="24"/>
        <end position="33"/>
    </location>
</feature>
<feature type="strand" evidence="8">
    <location>
        <begin position="35"/>
        <end position="39"/>
    </location>
</feature>
<feature type="strand" evidence="8">
    <location>
        <begin position="47"/>
        <end position="55"/>
    </location>
</feature>
<feature type="turn" evidence="8">
    <location>
        <begin position="56"/>
        <end position="59"/>
    </location>
</feature>
<feature type="strand" evidence="8">
    <location>
        <begin position="60"/>
        <end position="66"/>
    </location>
</feature>
<feature type="strand" evidence="8">
    <location>
        <begin position="73"/>
        <end position="78"/>
    </location>
</feature>
<feature type="helix" evidence="8">
    <location>
        <begin position="81"/>
        <end position="83"/>
    </location>
</feature>
<feature type="strand" evidence="8">
    <location>
        <begin position="87"/>
        <end position="96"/>
    </location>
</feature>
<feature type="strand" evidence="7">
    <location>
        <begin position="98"/>
        <end position="100"/>
    </location>
</feature>
<feature type="strand" evidence="8">
    <location>
        <begin position="105"/>
        <end position="117"/>
    </location>
</feature>
<feature type="strand" evidence="8">
    <location>
        <begin position="124"/>
        <end position="132"/>
    </location>
</feature>
<feature type="strand" evidence="8">
    <location>
        <begin position="140"/>
        <end position="144"/>
    </location>
</feature>
<feature type="helix" evidence="8">
    <location>
        <begin position="150"/>
        <end position="152"/>
    </location>
</feature>
<feature type="strand" evidence="8">
    <location>
        <begin position="170"/>
        <end position="177"/>
    </location>
</feature>
<feature type="strand" evidence="8">
    <location>
        <begin position="186"/>
        <end position="198"/>
    </location>
</feature>
<feature type="strand" evidence="8">
    <location>
        <begin position="202"/>
        <end position="205"/>
    </location>
</feature>
<feature type="strand" evidence="8">
    <location>
        <begin position="209"/>
        <end position="216"/>
    </location>
</feature>
<feature type="helix" evidence="8">
    <location>
        <begin position="227"/>
        <end position="229"/>
    </location>
</feature>
<feature type="turn" evidence="8">
    <location>
        <begin position="230"/>
        <end position="232"/>
    </location>
</feature>
<proteinExistence type="evidence at protein level"/>
<reference evidence="5" key="1">
    <citation type="journal article" date="2017" name="Int. J. Biol. Macromol.">
        <title>Structural characterization of a lectin from Canavalia virosa seeds with inflammatory and cytotoxic activities.</title>
        <authorList>
            <person name="Osterne V.J."/>
            <person name="Silva-Filho J.C."/>
            <person name="Santiago M.Q."/>
            <person name="Pinto-Junior V.R."/>
            <person name="Almeida A.C."/>
            <person name="Barreto A.A."/>
            <person name="Wolin I.A."/>
            <person name="Nascimento A.P."/>
            <person name="Amorim R.M."/>
            <person name="Rocha B.A."/>
            <person name="Delatorre P."/>
            <person name="Nagano C.S."/>
            <person name="Leal R.B."/>
            <person name="Assreuy A.M."/>
            <person name="Nascimento K.S."/>
            <person name="Cavada B.S."/>
        </authorList>
    </citation>
    <scope>PROTEIN SEQUENCE</scope>
    <scope>X-RAY CRYSTALLOGRAPHY (2.52 ANGSTROMS) IN COMPLEX WITH CALCIUM; MANGANESE AND CARBOHYDRATE</scope>
    <scope>FUNCTION</scope>
    <scope>SUBUNIT</scope>
    <scope>IDENTIFICATION BY MASS SPECTROMETRY</scope>
</reference>
<reference evidence="5" key="2">
    <citation type="journal article" date="2014" name="Appl. Biochem. Biotechnol.">
        <title>Purification, partial characterization, and CNBr-sepharose immobilization of a vasorelaxant glucose/mannose lectin from Canavalia virosa seeds.</title>
        <authorList>
            <person name="Osterne V.J."/>
            <person name="Santiago M.Q."/>
            <person name="Pinto-Junior V.R."/>
            <person name="Cajazeiras J.B."/>
            <person name="Correia J.L."/>
            <person name="Leitao C.C."/>
            <person name="Carneiro R.F."/>
            <person name="Pereira-Junior F.N."/>
            <person name="Vasconcelos M.A."/>
            <person name="Rocha B.A."/>
            <person name="Assreuy A.M."/>
            <person name="Bringel P.H."/>
            <person name="Nagano C.S."/>
            <person name="Nascimento K.S."/>
            <person name="Cavada B.S."/>
        </authorList>
    </citation>
    <scope>FUNCTION</scope>
    <scope>BIOPHYSICOCHEMICAL PROPERTIES</scope>
    <scope>MASS SPECTROMETRY</scope>
    <source>
        <tissue evidence="4">Seed</tissue>
    </source>
</reference>